<evidence type="ECO:0000255" key="1">
    <source>
        <dbReference type="HAMAP-Rule" id="MF_01062"/>
    </source>
</evidence>
<name>PSRP_XANC8</name>
<proteinExistence type="inferred from homology"/>
<protein>
    <recommendedName>
        <fullName evidence="1">Putative phosphoenolpyruvate synthase regulatory protein</fullName>
        <shortName evidence="1">PEP synthase regulatory protein</shortName>
        <shortName evidence="1">PSRP</shortName>
        <ecNumber evidence="1">2.7.11.33</ecNumber>
        <ecNumber evidence="1">2.7.4.28</ecNumber>
    </recommendedName>
    <alternativeName>
        <fullName evidence="1">Pyruvate, water dikinase regulatory protein</fullName>
    </alternativeName>
</protein>
<keyword id="KW-0418">Kinase</keyword>
<keyword id="KW-0547">Nucleotide-binding</keyword>
<keyword id="KW-0723">Serine/threonine-protein kinase</keyword>
<keyword id="KW-0808">Transferase</keyword>
<organism>
    <name type="scientific">Xanthomonas campestris pv. campestris (strain 8004)</name>
    <dbReference type="NCBI Taxonomy" id="314565"/>
    <lineage>
        <taxon>Bacteria</taxon>
        <taxon>Pseudomonadati</taxon>
        <taxon>Pseudomonadota</taxon>
        <taxon>Gammaproteobacteria</taxon>
        <taxon>Lysobacterales</taxon>
        <taxon>Lysobacteraceae</taxon>
        <taxon>Xanthomonas</taxon>
    </lineage>
</organism>
<reference key="1">
    <citation type="journal article" date="2005" name="Genome Res.">
        <title>Comparative and functional genomic analyses of the pathogenicity of phytopathogen Xanthomonas campestris pv. campestris.</title>
        <authorList>
            <person name="Qian W."/>
            <person name="Jia Y."/>
            <person name="Ren S.-X."/>
            <person name="He Y.-Q."/>
            <person name="Feng J.-X."/>
            <person name="Lu L.-F."/>
            <person name="Sun Q."/>
            <person name="Ying G."/>
            <person name="Tang D.-J."/>
            <person name="Tang H."/>
            <person name="Wu W."/>
            <person name="Hao P."/>
            <person name="Wang L."/>
            <person name="Jiang B.-L."/>
            <person name="Zeng S."/>
            <person name="Gu W.-Y."/>
            <person name="Lu G."/>
            <person name="Rong L."/>
            <person name="Tian Y."/>
            <person name="Yao Z."/>
            <person name="Fu G."/>
            <person name="Chen B."/>
            <person name="Fang R."/>
            <person name="Qiang B."/>
            <person name="Chen Z."/>
            <person name="Zhao G.-P."/>
            <person name="Tang J.-L."/>
            <person name="He C."/>
        </authorList>
    </citation>
    <scope>NUCLEOTIDE SEQUENCE [LARGE SCALE GENOMIC DNA]</scope>
    <source>
        <strain>8004</strain>
    </source>
</reference>
<accession>Q4UVA7</accession>
<gene>
    <name type="ordered locus">XC_1953</name>
</gene>
<sequence>MSTIRPVFYVSDGTGITAETIGHSLLTQFSGFNFVTDRMSFIDDADKARDAALRVRAAGERYQVRPVVVNSCVDPQLSMILAESGALMLDVFAPFIEPLERELNAPRHSRVGRAHGMVDFETYHRRINAMNFALSHDDGIALNYDEADVILVAVSRAGKTPTCIYLALHYGIRAANYPLTEEDLESERLPPRLRNYRSKLFGLTIDPERLQQIRQERRANSRYSAAETCRREVATAERMFQMERIPTLSTTNTSIEEISSKVLSTLGLQREMF</sequence>
<comment type="function">
    <text evidence="1">Bifunctional serine/threonine kinase and phosphorylase involved in the regulation of the phosphoenolpyruvate synthase (PEPS) by catalyzing its phosphorylation/dephosphorylation.</text>
</comment>
<comment type="catalytic activity">
    <reaction evidence="1">
        <text>[pyruvate, water dikinase] + ADP = [pyruvate, water dikinase]-phosphate + AMP + H(+)</text>
        <dbReference type="Rhea" id="RHEA:46020"/>
        <dbReference type="Rhea" id="RHEA-COMP:11425"/>
        <dbReference type="Rhea" id="RHEA-COMP:11426"/>
        <dbReference type="ChEBI" id="CHEBI:15378"/>
        <dbReference type="ChEBI" id="CHEBI:43176"/>
        <dbReference type="ChEBI" id="CHEBI:68546"/>
        <dbReference type="ChEBI" id="CHEBI:456215"/>
        <dbReference type="ChEBI" id="CHEBI:456216"/>
        <dbReference type="EC" id="2.7.11.33"/>
    </reaction>
</comment>
<comment type="catalytic activity">
    <reaction evidence="1">
        <text>[pyruvate, water dikinase]-phosphate + phosphate + H(+) = [pyruvate, water dikinase] + diphosphate</text>
        <dbReference type="Rhea" id="RHEA:48580"/>
        <dbReference type="Rhea" id="RHEA-COMP:11425"/>
        <dbReference type="Rhea" id="RHEA-COMP:11426"/>
        <dbReference type="ChEBI" id="CHEBI:15378"/>
        <dbReference type="ChEBI" id="CHEBI:33019"/>
        <dbReference type="ChEBI" id="CHEBI:43176"/>
        <dbReference type="ChEBI" id="CHEBI:43474"/>
        <dbReference type="ChEBI" id="CHEBI:68546"/>
        <dbReference type="EC" id="2.7.4.28"/>
    </reaction>
</comment>
<comment type="similarity">
    <text evidence="1">Belongs to the pyruvate, phosphate/water dikinase regulatory protein family. PSRP subfamily.</text>
</comment>
<dbReference type="EC" id="2.7.11.33" evidence="1"/>
<dbReference type="EC" id="2.7.4.28" evidence="1"/>
<dbReference type="EMBL" id="CP000050">
    <property type="protein sequence ID" value="AAY49016.1"/>
    <property type="molecule type" value="Genomic_DNA"/>
</dbReference>
<dbReference type="RefSeq" id="WP_011269676.1">
    <property type="nucleotide sequence ID" value="NZ_CP155948.1"/>
</dbReference>
<dbReference type="SMR" id="Q4UVA7"/>
<dbReference type="KEGG" id="xcb:XC_1953"/>
<dbReference type="HOGENOM" id="CLU_046206_1_0_6"/>
<dbReference type="Proteomes" id="UP000000420">
    <property type="component" value="Chromosome"/>
</dbReference>
<dbReference type="GO" id="GO:0043531">
    <property type="term" value="F:ADP binding"/>
    <property type="evidence" value="ECO:0007669"/>
    <property type="project" value="UniProtKB-UniRule"/>
</dbReference>
<dbReference type="GO" id="GO:0005524">
    <property type="term" value="F:ATP binding"/>
    <property type="evidence" value="ECO:0007669"/>
    <property type="project" value="InterPro"/>
</dbReference>
<dbReference type="GO" id="GO:0016776">
    <property type="term" value="F:phosphotransferase activity, phosphate group as acceptor"/>
    <property type="evidence" value="ECO:0007669"/>
    <property type="project" value="UniProtKB-UniRule"/>
</dbReference>
<dbReference type="GO" id="GO:0004674">
    <property type="term" value="F:protein serine/threonine kinase activity"/>
    <property type="evidence" value="ECO:0007669"/>
    <property type="project" value="UniProtKB-UniRule"/>
</dbReference>
<dbReference type="HAMAP" id="MF_01062">
    <property type="entry name" value="PSRP"/>
    <property type="match status" value="1"/>
</dbReference>
<dbReference type="InterPro" id="IPR005177">
    <property type="entry name" value="Kinase-pyrophosphorylase"/>
</dbReference>
<dbReference type="InterPro" id="IPR026530">
    <property type="entry name" value="PSRP"/>
</dbReference>
<dbReference type="NCBIfam" id="NF003742">
    <property type="entry name" value="PRK05339.1"/>
    <property type="match status" value="1"/>
</dbReference>
<dbReference type="PANTHER" id="PTHR31756">
    <property type="entry name" value="PYRUVATE, PHOSPHATE DIKINASE REGULATORY PROTEIN 1, CHLOROPLASTIC"/>
    <property type="match status" value="1"/>
</dbReference>
<dbReference type="PANTHER" id="PTHR31756:SF3">
    <property type="entry name" value="PYRUVATE, PHOSPHATE DIKINASE REGULATORY PROTEIN 1, CHLOROPLASTIC"/>
    <property type="match status" value="1"/>
</dbReference>
<dbReference type="Pfam" id="PF03618">
    <property type="entry name" value="Kinase-PPPase"/>
    <property type="match status" value="1"/>
</dbReference>
<feature type="chain" id="PRO_0000196744" description="Putative phosphoenolpyruvate synthase regulatory protein">
    <location>
        <begin position="1"/>
        <end position="273"/>
    </location>
</feature>
<feature type="binding site" evidence="1">
    <location>
        <begin position="153"/>
        <end position="160"/>
    </location>
    <ligand>
        <name>ADP</name>
        <dbReference type="ChEBI" id="CHEBI:456216"/>
    </ligand>
</feature>